<name>MUG45_SCHPO</name>
<evidence type="ECO:0000255" key="1"/>
<evidence type="ECO:0000269" key="2">
    <source>
    </source>
</evidence>
<evidence type="ECO:0000305" key="3"/>
<organism>
    <name type="scientific">Schizosaccharomyces pombe (strain 972 / ATCC 24843)</name>
    <name type="common">Fission yeast</name>
    <dbReference type="NCBI Taxonomy" id="284812"/>
    <lineage>
        <taxon>Eukaryota</taxon>
        <taxon>Fungi</taxon>
        <taxon>Dikarya</taxon>
        <taxon>Ascomycota</taxon>
        <taxon>Taphrinomycotina</taxon>
        <taxon>Schizosaccharomycetes</taxon>
        <taxon>Schizosaccharomycetales</taxon>
        <taxon>Schizosaccharomycetaceae</taxon>
        <taxon>Schizosaccharomyces</taxon>
    </lineage>
</organism>
<reference key="1">
    <citation type="journal article" date="2002" name="Nature">
        <title>The genome sequence of Schizosaccharomyces pombe.</title>
        <authorList>
            <person name="Wood V."/>
            <person name="Gwilliam R."/>
            <person name="Rajandream M.A."/>
            <person name="Lyne M.H."/>
            <person name="Lyne R."/>
            <person name="Stewart A."/>
            <person name="Sgouros J.G."/>
            <person name="Peat N."/>
            <person name="Hayles J."/>
            <person name="Baker S.G."/>
            <person name="Basham D."/>
            <person name="Bowman S."/>
            <person name="Brooks K."/>
            <person name="Brown D."/>
            <person name="Brown S."/>
            <person name="Chillingworth T."/>
            <person name="Churcher C.M."/>
            <person name="Collins M."/>
            <person name="Connor R."/>
            <person name="Cronin A."/>
            <person name="Davis P."/>
            <person name="Feltwell T."/>
            <person name="Fraser A."/>
            <person name="Gentles S."/>
            <person name="Goble A."/>
            <person name="Hamlin N."/>
            <person name="Harris D.E."/>
            <person name="Hidalgo J."/>
            <person name="Hodgson G."/>
            <person name="Holroyd S."/>
            <person name="Hornsby T."/>
            <person name="Howarth S."/>
            <person name="Huckle E.J."/>
            <person name="Hunt S."/>
            <person name="Jagels K."/>
            <person name="James K.D."/>
            <person name="Jones L."/>
            <person name="Jones M."/>
            <person name="Leather S."/>
            <person name="McDonald S."/>
            <person name="McLean J."/>
            <person name="Mooney P."/>
            <person name="Moule S."/>
            <person name="Mungall K.L."/>
            <person name="Murphy L.D."/>
            <person name="Niblett D."/>
            <person name="Odell C."/>
            <person name="Oliver K."/>
            <person name="O'Neil S."/>
            <person name="Pearson D."/>
            <person name="Quail M.A."/>
            <person name="Rabbinowitsch E."/>
            <person name="Rutherford K.M."/>
            <person name="Rutter S."/>
            <person name="Saunders D."/>
            <person name="Seeger K."/>
            <person name="Sharp S."/>
            <person name="Skelton J."/>
            <person name="Simmonds M.N."/>
            <person name="Squares R."/>
            <person name="Squares S."/>
            <person name="Stevens K."/>
            <person name="Taylor K."/>
            <person name="Taylor R.G."/>
            <person name="Tivey A."/>
            <person name="Walsh S.V."/>
            <person name="Warren T."/>
            <person name="Whitehead S."/>
            <person name="Woodward J.R."/>
            <person name="Volckaert G."/>
            <person name="Aert R."/>
            <person name="Robben J."/>
            <person name="Grymonprez B."/>
            <person name="Weltjens I."/>
            <person name="Vanstreels E."/>
            <person name="Rieger M."/>
            <person name="Schaefer M."/>
            <person name="Mueller-Auer S."/>
            <person name="Gabel C."/>
            <person name="Fuchs M."/>
            <person name="Duesterhoeft A."/>
            <person name="Fritzc C."/>
            <person name="Holzer E."/>
            <person name="Moestl D."/>
            <person name="Hilbert H."/>
            <person name="Borzym K."/>
            <person name="Langer I."/>
            <person name="Beck A."/>
            <person name="Lehrach H."/>
            <person name="Reinhardt R."/>
            <person name="Pohl T.M."/>
            <person name="Eger P."/>
            <person name="Zimmermann W."/>
            <person name="Wedler H."/>
            <person name="Wambutt R."/>
            <person name="Purnelle B."/>
            <person name="Goffeau A."/>
            <person name="Cadieu E."/>
            <person name="Dreano S."/>
            <person name="Gloux S."/>
            <person name="Lelaure V."/>
            <person name="Mottier S."/>
            <person name="Galibert F."/>
            <person name="Aves S.J."/>
            <person name="Xiang Z."/>
            <person name="Hunt C."/>
            <person name="Moore K."/>
            <person name="Hurst S.M."/>
            <person name="Lucas M."/>
            <person name="Rochet M."/>
            <person name="Gaillardin C."/>
            <person name="Tallada V.A."/>
            <person name="Garzon A."/>
            <person name="Thode G."/>
            <person name="Daga R.R."/>
            <person name="Cruzado L."/>
            <person name="Jimenez J."/>
            <person name="Sanchez M."/>
            <person name="del Rey F."/>
            <person name="Benito J."/>
            <person name="Dominguez A."/>
            <person name="Revuelta J.L."/>
            <person name="Moreno S."/>
            <person name="Armstrong J."/>
            <person name="Forsburg S.L."/>
            <person name="Cerutti L."/>
            <person name="Lowe T."/>
            <person name="McCombie W.R."/>
            <person name="Paulsen I."/>
            <person name="Potashkin J."/>
            <person name="Shpakovski G.V."/>
            <person name="Ussery D."/>
            <person name="Barrell B.G."/>
            <person name="Nurse P."/>
        </authorList>
    </citation>
    <scope>NUCLEOTIDE SEQUENCE [LARGE SCALE GENOMIC DNA]</scope>
    <source>
        <strain>972 / ATCC 24843</strain>
    </source>
</reference>
<reference key="2">
    <citation type="journal article" date="2005" name="Curr. Biol.">
        <title>A large-scale screen in S. pombe identifies seven novel genes required for critical meiotic events.</title>
        <authorList>
            <person name="Martin-Castellanos C."/>
            <person name="Blanco M."/>
            <person name="Rozalen A.E."/>
            <person name="Perez-Hidalgo L."/>
            <person name="Garcia A.I."/>
            <person name="Conde F."/>
            <person name="Mata J."/>
            <person name="Ellermeier C."/>
            <person name="Davis L."/>
            <person name="San-Segundo P."/>
            <person name="Smith G.R."/>
            <person name="Moreno S."/>
        </authorList>
    </citation>
    <scope>FUNCTION IN MEIOSIS</scope>
</reference>
<accession>O94254</accession>
<feature type="chain" id="PRO_0000278500" description="Meiotically up-regulated gene 45 protein">
    <location>
        <begin position="1"/>
        <end position="819"/>
    </location>
</feature>
<feature type="transmembrane region" description="Helical" evidence="1">
    <location>
        <begin position="797"/>
        <end position="817"/>
    </location>
</feature>
<gene>
    <name type="primary">mug45</name>
    <name type="ORF">SPBP8B7.04</name>
</gene>
<proteinExistence type="evidence at protein level"/>
<comment type="function">
    <text evidence="2">Has a role in meiosis.</text>
</comment>
<comment type="subcellular location">
    <subcellularLocation>
        <location evidence="3">Membrane</location>
        <topology evidence="3">Single-pass membrane protein</topology>
    </subcellularLocation>
</comment>
<keyword id="KW-0469">Meiosis</keyword>
<keyword id="KW-0472">Membrane</keyword>
<keyword id="KW-1185">Reference proteome</keyword>
<keyword id="KW-0812">Transmembrane</keyword>
<keyword id="KW-1133">Transmembrane helix</keyword>
<dbReference type="EMBL" id="CU329671">
    <property type="protein sequence ID" value="CAA21789.1"/>
    <property type="molecule type" value="Genomic_DNA"/>
</dbReference>
<dbReference type="PIR" id="T40798">
    <property type="entry name" value="T40798"/>
</dbReference>
<dbReference type="RefSeq" id="NP_596511.1">
    <property type="nucleotide sequence ID" value="NM_001022432.2"/>
</dbReference>
<dbReference type="SMR" id="O94254"/>
<dbReference type="BioGRID" id="277887">
    <property type="interactions" value="5"/>
</dbReference>
<dbReference type="STRING" id="284812.O94254"/>
<dbReference type="PaxDb" id="4896-SPBP8B7.04.1"/>
<dbReference type="EnsemblFungi" id="SPBP8B7.04.1">
    <property type="protein sequence ID" value="SPBP8B7.04.1:pep"/>
    <property type="gene ID" value="SPBP8B7.04"/>
</dbReference>
<dbReference type="GeneID" id="2541376"/>
<dbReference type="KEGG" id="spo:2541376"/>
<dbReference type="PomBase" id="SPBP8B7.04">
    <property type="gene designation" value="mug45"/>
</dbReference>
<dbReference type="VEuPathDB" id="FungiDB:SPBP8B7.04"/>
<dbReference type="HOGENOM" id="CLU_349894_0_0_1"/>
<dbReference type="InParanoid" id="O94254"/>
<dbReference type="OMA" id="ALGCCEF"/>
<dbReference type="PRO" id="PR:O94254"/>
<dbReference type="Proteomes" id="UP000002485">
    <property type="component" value="Chromosome II"/>
</dbReference>
<dbReference type="GO" id="GO:0016020">
    <property type="term" value="C:membrane"/>
    <property type="evidence" value="ECO:0007669"/>
    <property type="project" value="UniProtKB-SubCell"/>
</dbReference>
<dbReference type="GO" id="GO:0051321">
    <property type="term" value="P:meiotic cell cycle"/>
    <property type="evidence" value="ECO:0007669"/>
    <property type="project" value="UniProtKB-KW"/>
</dbReference>
<protein>
    <recommendedName>
        <fullName>Meiotically up-regulated gene 45 protein</fullName>
    </recommendedName>
</protein>
<sequence length="819" mass="94732">MKNLANIKLYWNENDFLIADMLLILKLSPRSSSDCLLDLRDRKWELVCCKELNIGNERNPLNVPLFELPVNSLELQNSVSNDMFKHVYSQNVELNHKTQVDFTEQLIPKKSLNKLNGTLRETMSRMPSFESISLSETSNALDDSCFNDDWITIESEFSPPIDRGMTLEAMDSQNDTLFTSKQLNNGPNFPVEKATFFLESNMGLSQRAAATSTTPVCNISSVTSAINSVGEISNASHSSSTSELPCTYGNTSSIFQVKNEMSNIKSAISEGYIAHDQQSKKVSVQNIKKEFLIPFEFSLEGGFLNYNKTFSNLYKVLSETEKTRDSKVWFTFRLVLKTKPLYASESEFYETKLNFFTFPLECAINFHIDCSCFDDWRLFSLKESSSVAVPIPKIKKESGRSMFQSLLFQFNHCIPFRLSWINYKQSQLNIILTETTIRPRICAAYQKLEYNILVLLNEKPSSGSQLILSASPTCTIENIYIENTRLHFSKSQTPEQTVISFIDVQCVKVTEATKTLELSVILSERLVYETALKLPVIKYVKGDNRFCFKQLLEYYDIYLKFKLLADWRLLTNPVLQIQEISDYCHFKLLKKVNRNLQIKTNYPTQEFHLLRPTIKILQISKHEYFLHFSSSYIFNDARERDVYGVKLSKNMWISWAYVDNCEANFFCKDGTYFFRTTSRKQILLLEIGILIKPERYNLFKYRVYLPQFLPPTDSRTLVEFQTIVYTNSTLLFDGSFYFSQNGGFDFEPRQNYTYFDFKSEFIILQNSYSIYGPAKNIIKLLLELIEVILNVNVSTTAMCLLTLLIGIYLILQVVFIYTN</sequence>